<name>SYC_DESRM</name>
<proteinExistence type="inferred from homology"/>
<sequence length="486" mass="55741">MQIYNTLARAKEEFIPRDKGHVSMYVCGPTTYNFIHLGNARPLVFFDTVRRYFLYKGYKVDYVQNFTDVDDKIINRAAEEKIDPLELAQKYIQEFFVDADALNVMRADTHPKVSEHIEEIIDLIKRLEDQGHAYVVDGDVYFAVRSFAEYGKLSGRSLEDMQAGARVEVDPRKKDPMDFALWKAAKPGEPSWDSPWGSGRPGWHIECSAMAEKYLGNGFDIHGGGFDLIFPHHENEIAQSEAACKAPFARYWMHNGFITINQEKMSKSLGNFFLVREILAKFPPDVVRWYLLSTHYRSPLDFDDEKLVMSGKGLERIKTALRLLYEAMDLPVYEGEDIQGAENFEETLQRIRLEFEKAMDDDFNTALAISYFFDLAKEVNIYVGKLNSKVTLEMRKILDQAHTLIKDFNRVLGILKEDKMTGKLLIEMAGADDTLTEGLVQLIIKIRQEARSKKDWSTADAIRDGLKELGVVLEDTPQGVRWKKQG</sequence>
<protein>
    <recommendedName>
        <fullName evidence="1">Cysteine--tRNA ligase</fullName>
        <ecNumber evidence="1">6.1.1.16</ecNumber>
    </recommendedName>
    <alternativeName>
        <fullName evidence="1">Cysteinyl-tRNA synthetase</fullName>
        <shortName evidence="1">CysRS</shortName>
    </alternativeName>
</protein>
<accession>A4J0Y9</accession>
<keyword id="KW-0030">Aminoacyl-tRNA synthetase</keyword>
<keyword id="KW-0067">ATP-binding</keyword>
<keyword id="KW-0963">Cytoplasm</keyword>
<keyword id="KW-0436">Ligase</keyword>
<keyword id="KW-0479">Metal-binding</keyword>
<keyword id="KW-0547">Nucleotide-binding</keyword>
<keyword id="KW-0648">Protein biosynthesis</keyword>
<keyword id="KW-1185">Reference proteome</keyword>
<keyword id="KW-0862">Zinc</keyword>
<reference key="1">
    <citation type="submission" date="2007-03" db="EMBL/GenBank/DDBJ databases">
        <title>Complete sequence of Desulfotomaculum reducens MI-1.</title>
        <authorList>
            <consortium name="US DOE Joint Genome Institute"/>
            <person name="Copeland A."/>
            <person name="Lucas S."/>
            <person name="Lapidus A."/>
            <person name="Barry K."/>
            <person name="Detter J.C."/>
            <person name="Glavina del Rio T."/>
            <person name="Hammon N."/>
            <person name="Israni S."/>
            <person name="Dalin E."/>
            <person name="Tice H."/>
            <person name="Pitluck S."/>
            <person name="Sims D."/>
            <person name="Brettin T."/>
            <person name="Bruce D."/>
            <person name="Han C."/>
            <person name="Tapia R."/>
            <person name="Schmutz J."/>
            <person name="Larimer F."/>
            <person name="Land M."/>
            <person name="Hauser L."/>
            <person name="Kyrpides N."/>
            <person name="Kim E."/>
            <person name="Tebo B.M."/>
            <person name="Richardson P."/>
        </authorList>
    </citation>
    <scope>NUCLEOTIDE SEQUENCE [LARGE SCALE GENOMIC DNA]</scope>
    <source>
        <strain>ATCC BAA-1160 / DSM 100696 / MI-1</strain>
    </source>
</reference>
<organism>
    <name type="scientific">Desulforamulus reducens (strain ATCC BAA-1160 / DSM 100696 / MI-1)</name>
    <name type="common">Desulfotomaculum reducens</name>
    <dbReference type="NCBI Taxonomy" id="349161"/>
    <lineage>
        <taxon>Bacteria</taxon>
        <taxon>Bacillati</taxon>
        <taxon>Bacillota</taxon>
        <taxon>Clostridia</taxon>
        <taxon>Eubacteriales</taxon>
        <taxon>Peptococcaceae</taxon>
        <taxon>Desulforamulus</taxon>
    </lineage>
</organism>
<feature type="chain" id="PRO_0000332815" description="Cysteine--tRNA ligase">
    <location>
        <begin position="1"/>
        <end position="486"/>
    </location>
</feature>
<feature type="short sequence motif" description="'HIGH' region">
    <location>
        <begin position="29"/>
        <end position="39"/>
    </location>
</feature>
<feature type="short sequence motif" description="'KMSKS' region">
    <location>
        <begin position="264"/>
        <end position="268"/>
    </location>
</feature>
<feature type="binding site" evidence="1">
    <location>
        <position position="27"/>
    </location>
    <ligand>
        <name>Zn(2+)</name>
        <dbReference type="ChEBI" id="CHEBI:29105"/>
    </ligand>
</feature>
<feature type="binding site" evidence="1">
    <location>
        <position position="207"/>
    </location>
    <ligand>
        <name>Zn(2+)</name>
        <dbReference type="ChEBI" id="CHEBI:29105"/>
    </ligand>
</feature>
<feature type="binding site" evidence="1">
    <location>
        <position position="232"/>
    </location>
    <ligand>
        <name>Zn(2+)</name>
        <dbReference type="ChEBI" id="CHEBI:29105"/>
    </ligand>
</feature>
<feature type="binding site" evidence="1">
    <location>
        <position position="236"/>
    </location>
    <ligand>
        <name>Zn(2+)</name>
        <dbReference type="ChEBI" id="CHEBI:29105"/>
    </ligand>
</feature>
<feature type="binding site" evidence="1">
    <location>
        <position position="267"/>
    </location>
    <ligand>
        <name>ATP</name>
        <dbReference type="ChEBI" id="CHEBI:30616"/>
    </ligand>
</feature>
<comment type="catalytic activity">
    <reaction evidence="1">
        <text>tRNA(Cys) + L-cysteine + ATP = L-cysteinyl-tRNA(Cys) + AMP + diphosphate</text>
        <dbReference type="Rhea" id="RHEA:17773"/>
        <dbReference type="Rhea" id="RHEA-COMP:9661"/>
        <dbReference type="Rhea" id="RHEA-COMP:9679"/>
        <dbReference type="ChEBI" id="CHEBI:30616"/>
        <dbReference type="ChEBI" id="CHEBI:33019"/>
        <dbReference type="ChEBI" id="CHEBI:35235"/>
        <dbReference type="ChEBI" id="CHEBI:78442"/>
        <dbReference type="ChEBI" id="CHEBI:78517"/>
        <dbReference type="ChEBI" id="CHEBI:456215"/>
        <dbReference type="EC" id="6.1.1.16"/>
    </reaction>
</comment>
<comment type="cofactor">
    <cofactor evidence="1">
        <name>Zn(2+)</name>
        <dbReference type="ChEBI" id="CHEBI:29105"/>
    </cofactor>
    <text evidence="1">Binds 1 zinc ion per subunit.</text>
</comment>
<comment type="subunit">
    <text evidence="1">Monomer.</text>
</comment>
<comment type="subcellular location">
    <subcellularLocation>
        <location evidence="1">Cytoplasm</location>
    </subcellularLocation>
</comment>
<comment type="similarity">
    <text evidence="1">Belongs to the class-I aminoacyl-tRNA synthetase family.</text>
</comment>
<gene>
    <name evidence="1" type="primary">cysS</name>
    <name type="ordered locus">Dred_0193</name>
</gene>
<dbReference type="EC" id="6.1.1.16" evidence="1"/>
<dbReference type="EMBL" id="CP000612">
    <property type="protein sequence ID" value="ABO48742.1"/>
    <property type="molecule type" value="Genomic_DNA"/>
</dbReference>
<dbReference type="RefSeq" id="WP_011876583.1">
    <property type="nucleotide sequence ID" value="NC_009253.1"/>
</dbReference>
<dbReference type="SMR" id="A4J0Y9"/>
<dbReference type="STRING" id="349161.Dred_0193"/>
<dbReference type="KEGG" id="drm:Dred_0193"/>
<dbReference type="eggNOG" id="COG0215">
    <property type="taxonomic scope" value="Bacteria"/>
</dbReference>
<dbReference type="HOGENOM" id="CLU_013528_0_1_9"/>
<dbReference type="OrthoDB" id="9815130at2"/>
<dbReference type="Proteomes" id="UP000001556">
    <property type="component" value="Chromosome"/>
</dbReference>
<dbReference type="GO" id="GO:0005829">
    <property type="term" value="C:cytosol"/>
    <property type="evidence" value="ECO:0007669"/>
    <property type="project" value="TreeGrafter"/>
</dbReference>
<dbReference type="GO" id="GO:0005524">
    <property type="term" value="F:ATP binding"/>
    <property type="evidence" value="ECO:0007669"/>
    <property type="project" value="UniProtKB-UniRule"/>
</dbReference>
<dbReference type="GO" id="GO:0004817">
    <property type="term" value="F:cysteine-tRNA ligase activity"/>
    <property type="evidence" value="ECO:0007669"/>
    <property type="project" value="UniProtKB-UniRule"/>
</dbReference>
<dbReference type="GO" id="GO:0008270">
    <property type="term" value="F:zinc ion binding"/>
    <property type="evidence" value="ECO:0007669"/>
    <property type="project" value="UniProtKB-UniRule"/>
</dbReference>
<dbReference type="GO" id="GO:0006423">
    <property type="term" value="P:cysteinyl-tRNA aminoacylation"/>
    <property type="evidence" value="ECO:0007669"/>
    <property type="project" value="UniProtKB-UniRule"/>
</dbReference>
<dbReference type="CDD" id="cd00672">
    <property type="entry name" value="CysRS_core"/>
    <property type="match status" value="1"/>
</dbReference>
<dbReference type="FunFam" id="3.40.50.620:FF:000009">
    <property type="entry name" value="Cysteine--tRNA ligase"/>
    <property type="match status" value="1"/>
</dbReference>
<dbReference type="Gene3D" id="1.20.120.1910">
    <property type="entry name" value="Cysteine-tRNA ligase, C-terminal anti-codon recognition domain"/>
    <property type="match status" value="1"/>
</dbReference>
<dbReference type="Gene3D" id="3.40.50.620">
    <property type="entry name" value="HUPs"/>
    <property type="match status" value="1"/>
</dbReference>
<dbReference type="HAMAP" id="MF_00041">
    <property type="entry name" value="Cys_tRNA_synth"/>
    <property type="match status" value="1"/>
</dbReference>
<dbReference type="InterPro" id="IPR015803">
    <property type="entry name" value="Cys-tRNA-ligase"/>
</dbReference>
<dbReference type="InterPro" id="IPR015273">
    <property type="entry name" value="Cys-tRNA-synt_Ia_DALR"/>
</dbReference>
<dbReference type="InterPro" id="IPR024909">
    <property type="entry name" value="Cys-tRNA/MSH_ligase"/>
</dbReference>
<dbReference type="InterPro" id="IPR056411">
    <property type="entry name" value="CysS_C"/>
</dbReference>
<dbReference type="InterPro" id="IPR014729">
    <property type="entry name" value="Rossmann-like_a/b/a_fold"/>
</dbReference>
<dbReference type="InterPro" id="IPR032678">
    <property type="entry name" value="tRNA-synt_1_cat_dom"/>
</dbReference>
<dbReference type="InterPro" id="IPR009080">
    <property type="entry name" value="tRNAsynth_Ia_anticodon-bd"/>
</dbReference>
<dbReference type="NCBIfam" id="TIGR00435">
    <property type="entry name" value="cysS"/>
    <property type="match status" value="1"/>
</dbReference>
<dbReference type="PANTHER" id="PTHR10890:SF3">
    <property type="entry name" value="CYSTEINE--TRNA LIGASE, CYTOPLASMIC"/>
    <property type="match status" value="1"/>
</dbReference>
<dbReference type="PANTHER" id="PTHR10890">
    <property type="entry name" value="CYSTEINYL-TRNA SYNTHETASE"/>
    <property type="match status" value="1"/>
</dbReference>
<dbReference type="Pfam" id="PF23493">
    <property type="entry name" value="CysS_C"/>
    <property type="match status" value="1"/>
</dbReference>
<dbReference type="Pfam" id="PF09190">
    <property type="entry name" value="DALR_2"/>
    <property type="match status" value="1"/>
</dbReference>
<dbReference type="Pfam" id="PF01406">
    <property type="entry name" value="tRNA-synt_1e"/>
    <property type="match status" value="1"/>
</dbReference>
<dbReference type="PRINTS" id="PR00983">
    <property type="entry name" value="TRNASYNTHCYS"/>
</dbReference>
<dbReference type="SMART" id="SM00840">
    <property type="entry name" value="DALR_2"/>
    <property type="match status" value="1"/>
</dbReference>
<dbReference type="SUPFAM" id="SSF47323">
    <property type="entry name" value="Anticodon-binding domain of a subclass of class I aminoacyl-tRNA synthetases"/>
    <property type="match status" value="1"/>
</dbReference>
<dbReference type="SUPFAM" id="SSF52374">
    <property type="entry name" value="Nucleotidylyl transferase"/>
    <property type="match status" value="1"/>
</dbReference>
<evidence type="ECO:0000255" key="1">
    <source>
        <dbReference type="HAMAP-Rule" id="MF_00041"/>
    </source>
</evidence>